<name>SYE_ANADE</name>
<accession>Q2IL38</accession>
<gene>
    <name evidence="1" type="primary">gltX</name>
    <name type="ordered locus">Adeh_2597</name>
</gene>
<protein>
    <recommendedName>
        <fullName evidence="1">Glutamate--tRNA ligase</fullName>
        <ecNumber evidence="1">6.1.1.17</ecNumber>
    </recommendedName>
    <alternativeName>
        <fullName evidence="1">Glutamyl-tRNA synthetase</fullName>
        <shortName evidence="1">GluRS</shortName>
    </alternativeName>
</protein>
<dbReference type="EC" id="6.1.1.17" evidence="1"/>
<dbReference type="EMBL" id="CP000251">
    <property type="protein sequence ID" value="ABC82367.1"/>
    <property type="molecule type" value="Genomic_DNA"/>
</dbReference>
<dbReference type="RefSeq" id="WP_011421649.1">
    <property type="nucleotide sequence ID" value="NC_007760.1"/>
</dbReference>
<dbReference type="SMR" id="Q2IL38"/>
<dbReference type="STRING" id="290397.Adeh_2597"/>
<dbReference type="KEGG" id="ade:Adeh_2597"/>
<dbReference type="eggNOG" id="COG0008">
    <property type="taxonomic scope" value="Bacteria"/>
</dbReference>
<dbReference type="HOGENOM" id="CLU_015768_6_3_7"/>
<dbReference type="OrthoDB" id="9807503at2"/>
<dbReference type="Proteomes" id="UP000001935">
    <property type="component" value="Chromosome"/>
</dbReference>
<dbReference type="GO" id="GO:0005829">
    <property type="term" value="C:cytosol"/>
    <property type="evidence" value="ECO:0007669"/>
    <property type="project" value="TreeGrafter"/>
</dbReference>
<dbReference type="GO" id="GO:0005524">
    <property type="term" value="F:ATP binding"/>
    <property type="evidence" value="ECO:0007669"/>
    <property type="project" value="UniProtKB-UniRule"/>
</dbReference>
<dbReference type="GO" id="GO:0004818">
    <property type="term" value="F:glutamate-tRNA ligase activity"/>
    <property type="evidence" value="ECO:0007669"/>
    <property type="project" value="UniProtKB-UniRule"/>
</dbReference>
<dbReference type="GO" id="GO:0000049">
    <property type="term" value="F:tRNA binding"/>
    <property type="evidence" value="ECO:0007669"/>
    <property type="project" value="InterPro"/>
</dbReference>
<dbReference type="GO" id="GO:0008270">
    <property type="term" value="F:zinc ion binding"/>
    <property type="evidence" value="ECO:0007669"/>
    <property type="project" value="UniProtKB-UniRule"/>
</dbReference>
<dbReference type="GO" id="GO:0006424">
    <property type="term" value="P:glutamyl-tRNA aminoacylation"/>
    <property type="evidence" value="ECO:0007669"/>
    <property type="project" value="UniProtKB-UniRule"/>
</dbReference>
<dbReference type="CDD" id="cd00808">
    <property type="entry name" value="GluRS_core"/>
    <property type="match status" value="1"/>
</dbReference>
<dbReference type="FunFam" id="3.40.50.620:FF:000007">
    <property type="entry name" value="Glutamate--tRNA ligase"/>
    <property type="match status" value="1"/>
</dbReference>
<dbReference type="Gene3D" id="1.10.10.350">
    <property type="match status" value="1"/>
</dbReference>
<dbReference type="Gene3D" id="1.10.8.70">
    <property type="entry name" value="Glutamate-tRNA synthetase, class I, anticodon-binding domain 1"/>
    <property type="match status" value="1"/>
</dbReference>
<dbReference type="Gene3D" id="3.40.50.620">
    <property type="entry name" value="HUPs"/>
    <property type="match status" value="1"/>
</dbReference>
<dbReference type="HAMAP" id="MF_00022">
    <property type="entry name" value="Glu_tRNA_synth_type1"/>
    <property type="match status" value="1"/>
</dbReference>
<dbReference type="InterPro" id="IPR045462">
    <property type="entry name" value="aa-tRNA-synth_I_cd-bd"/>
</dbReference>
<dbReference type="InterPro" id="IPR020751">
    <property type="entry name" value="aa-tRNA-synth_I_codon-bd_sub2"/>
</dbReference>
<dbReference type="InterPro" id="IPR001412">
    <property type="entry name" value="aa-tRNA-synth_I_CS"/>
</dbReference>
<dbReference type="InterPro" id="IPR008925">
    <property type="entry name" value="aa_tRNA-synth_I_cd-bd_sf"/>
</dbReference>
<dbReference type="InterPro" id="IPR004527">
    <property type="entry name" value="Glu-tRNA-ligase_bac/mito"/>
</dbReference>
<dbReference type="InterPro" id="IPR020752">
    <property type="entry name" value="Glu-tRNA-synth_I_codon-bd_sub1"/>
</dbReference>
<dbReference type="InterPro" id="IPR000924">
    <property type="entry name" value="Glu/Gln-tRNA-synth"/>
</dbReference>
<dbReference type="InterPro" id="IPR020058">
    <property type="entry name" value="Glu/Gln-tRNA-synth_Ib_cat-dom"/>
</dbReference>
<dbReference type="InterPro" id="IPR049940">
    <property type="entry name" value="GluQ/Sye"/>
</dbReference>
<dbReference type="InterPro" id="IPR033910">
    <property type="entry name" value="GluRS_core"/>
</dbReference>
<dbReference type="InterPro" id="IPR014729">
    <property type="entry name" value="Rossmann-like_a/b/a_fold"/>
</dbReference>
<dbReference type="NCBIfam" id="TIGR00464">
    <property type="entry name" value="gltX_bact"/>
    <property type="match status" value="1"/>
</dbReference>
<dbReference type="PANTHER" id="PTHR43311">
    <property type="entry name" value="GLUTAMATE--TRNA LIGASE"/>
    <property type="match status" value="1"/>
</dbReference>
<dbReference type="PANTHER" id="PTHR43311:SF2">
    <property type="entry name" value="GLUTAMATE--TRNA LIGASE, MITOCHONDRIAL-RELATED"/>
    <property type="match status" value="1"/>
</dbReference>
<dbReference type="Pfam" id="PF19269">
    <property type="entry name" value="Anticodon_2"/>
    <property type="match status" value="1"/>
</dbReference>
<dbReference type="Pfam" id="PF00749">
    <property type="entry name" value="tRNA-synt_1c"/>
    <property type="match status" value="1"/>
</dbReference>
<dbReference type="PRINTS" id="PR00987">
    <property type="entry name" value="TRNASYNTHGLU"/>
</dbReference>
<dbReference type="SUPFAM" id="SSF48163">
    <property type="entry name" value="An anticodon-binding domain of class I aminoacyl-tRNA synthetases"/>
    <property type="match status" value="1"/>
</dbReference>
<dbReference type="SUPFAM" id="SSF52374">
    <property type="entry name" value="Nucleotidylyl transferase"/>
    <property type="match status" value="1"/>
</dbReference>
<dbReference type="PROSITE" id="PS00178">
    <property type="entry name" value="AA_TRNA_LIGASE_I"/>
    <property type="match status" value="1"/>
</dbReference>
<keyword id="KW-0030">Aminoacyl-tRNA synthetase</keyword>
<keyword id="KW-0067">ATP-binding</keyword>
<keyword id="KW-0963">Cytoplasm</keyword>
<keyword id="KW-0436">Ligase</keyword>
<keyword id="KW-0479">Metal-binding</keyword>
<keyword id="KW-0547">Nucleotide-binding</keyword>
<keyword id="KW-0648">Protein biosynthesis</keyword>
<keyword id="KW-1185">Reference proteome</keyword>
<keyword id="KW-0862">Zinc</keyword>
<sequence length="474" mass="52978">MDKPRVRFAPSPTGYLHIGGARTALFNWLWARRNGGTFVLRIEDTDRERSTQLAVDAILDGLRWLGLDWDEGPGVGGPHPPYFQTERLDLYKAHAERLIREGKAYACYCTREELDAQRKQAEAEKRQFRYPGTCRDEPYDPSRPHVVRFRVPDAGATSWNDLVKGVISTPHDTLQDEVILRGDGVPLYNFGAVVDDITMEINLVGRGDDHVNNTARQILMYEALGYPVPTFAHFPMILGADKARLSKRHGATSVTAYRDLGFLPQAVVNYLVRLGWSHGDQELFTLDELVRYFDLKDVGATAGVFNLEKMAWVNHEWLKRLSPEELAKLALPHFRAAGLPAEDDEKLRHVCAVARERAKTLGEYVQQFRYFYAPIALDPKAKAKFLTADTRPVLQAVRDAIAALPALETQAVEQVFHGEAERRGVGLGKVAQPARVALTGGTASPGMYDVVQILGKDETLRRLDEAIRVAGQPG</sequence>
<proteinExistence type="inferred from homology"/>
<evidence type="ECO:0000255" key="1">
    <source>
        <dbReference type="HAMAP-Rule" id="MF_00022"/>
    </source>
</evidence>
<organism>
    <name type="scientific">Anaeromyxobacter dehalogenans (strain 2CP-C)</name>
    <dbReference type="NCBI Taxonomy" id="290397"/>
    <lineage>
        <taxon>Bacteria</taxon>
        <taxon>Pseudomonadati</taxon>
        <taxon>Myxococcota</taxon>
        <taxon>Myxococcia</taxon>
        <taxon>Myxococcales</taxon>
        <taxon>Cystobacterineae</taxon>
        <taxon>Anaeromyxobacteraceae</taxon>
        <taxon>Anaeromyxobacter</taxon>
    </lineage>
</organism>
<comment type="function">
    <text evidence="1">Catalyzes the attachment of glutamate to tRNA(Glu) in a two-step reaction: glutamate is first activated by ATP to form Glu-AMP and then transferred to the acceptor end of tRNA(Glu).</text>
</comment>
<comment type="catalytic activity">
    <reaction evidence="1">
        <text>tRNA(Glu) + L-glutamate + ATP = L-glutamyl-tRNA(Glu) + AMP + diphosphate</text>
        <dbReference type="Rhea" id="RHEA:23540"/>
        <dbReference type="Rhea" id="RHEA-COMP:9663"/>
        <dbReference type="Rhea" id="RHEA-COMP:9680"/>
        <dbReference type="ChEBI" id="CHEBI:29985"/>
        <dbReference type="ChEBI" id="CHEBI:30616"/>
        <dbReference type="ChEBI" id="CHEBI:33019"/>
        <dbReference type="ChEBI" id="CHEBI:78442"/>
        <dbReference type="ChEBI" id="CHEBI:78520"/>
        <dbReference type="ChEBI" id="CHEBI:456215"/>
        <dbReference type="EC" id="6.1.1.17"/>
    </reaction>
</comment>
<comment type="cofactor">
    <cofactor evidence="1">
        <name>Zn(2+)</name>
        <dbReference type="ChEBI" id="CHEBI:29105"/>
    </cofactor>
    <text evidence="1">Binds 1 zinc ion per subunit.</text>
</comment>
<comment type="subunit">
    <text evidence="1">Monomer.</text>
</comment>
<comment type="subcellular location">
    <subcellularLocation>
        <location evidence="1">Cytoplasm</location>
    </subcellularLocation>
</comment>
<comment type="similarity">
    <text evidence="1">Belongs to the class-I aminoacyl-tRNA synthetase family. Glutamate--tRNA ligase type 1 subfamily.</text>
</comment>
<reference key="1">
    <citation type="submission" date="2006-01" db="EMBL/GenBank/DDBJ databases">
        <title>Complete sequence of Anaeromyxobacter dehalogenans 2CP-C.</title>
        <authorList>
            <person name="Copeland A."/>
            <person name="Lucas S."/>
            <person name="Lapidus A."/>
            <person name="Barry K."/>
            <person name="Detter J.C."/>
            <person name="Glavina T."/>
            <person name="Hammon N."/>
            <person name="Israni S."/>
            <person name="Pitluck S."/>
            <person name="Brettin T."/>
            <person name="Bruce D."/>
            <person name="Han C."/>
            <person name="Tapia R."/>
            <person name="Gilna P."/>
            <person name="Kiss H."/>
            <person name="Schmutz J."/>
            <person name="Larimer F."/>
            <person name="Land M."/>
            <person name="Kyrpides N."/>
            <person name="Anderson I."/>
            <person name="Sanford R.A."/>
            <person name="Ritalahti K.M."/>
            <person name="Thomas H.S."/>
            <person name="Kirby J.R."/>
            <person name="Zhulin I.B."/>
            <person name="Loeffler F.E."/>
            <person name="Richardson P."/>
        </authorList>
    </citation>
    <scope>NUCLEOTIDE SEQUENCE [LARGE SCALE GENOMIC DNA]</scope>
    <source>
        <strain>2CP-C</strain>
    </source>
</reference>
<feature type="chain" id="PRO_0000237336" description="Glutamate--tRNA ligase">
    <location>
        <begin position="1"/>
        <end position="474"/>
    </location>
</feature>
<feature type="short sequence motif" description="'HIGH' region" evidence="1">
    <location>
        <begin position="10"/>
        <end position="20"/>
    </location>
</feature>
<feature type="short sequence motif" description="'KMSKS' region" evidence="1">
    <location>
        <begin position="244"/>
        <end position="248"/>
    </location>
</feature>
<feature type="binding site" evidence="1">
    <location>
        <position position="107"/>
    </location>
    <ligand>
        <name>Zn(2+)</name>
        <dbReference type="ChEBI" id="CHEBI:29105"/>
    </ligand>
</feature>
<feature type="binding site" evidence="1">
    <location>
        <position position="109"/>
    </location>
    <ligand>
        <name>Zn(2+)</name>
        <dbReference type="ChEBI" id="CHEBI:29105"/>
    </ligand>
</feature>
<feature type="binding site" evidence="1">
    <location>
        <position position="134"/>
    </location>
    <ligand>
        <name>Zn(2+)</name>
        <dbReference type="ChEBI" id="CHEBI:29105"/>
    </ligand>
</feature>
<feature type="binding site" evidence="1">
    <location>
        <position position="136"/>
    </location>
    <ligand>
        <name>Zn(2+)</name>
        <dbReference type="ChEBI" id="CHEBI:29105"/>
    </ligand>
</feature>
<feature type="binding site" evidence="1">
    <location>
        <position position="247"/>
    </location>
    <ligand>
        <name>ATP</name>
        <dbReference type="ChEBI" id="CHEBI:30616"/>
    </ligand>
</feature>